<evidence type="ECO:0000255" key="1">
    <source>
        <dbReference type="HAMAP-Rule" id="MF_00444"/>
    </source>
</evidence>
<evidence type="ECO:0000305" key="2"/>
<dbReference type="EC" id="3.4.21.92" evidence="1"/>
<dbReference type="EMBL" id="CP000395">
    <property type="protein sequence ID" value="ABH01882.1"/>
    <property type="molecule type" value="Genomic_DNA"/>
</dbReference>
<dbReference type="EMBL" id="CP002933">
    <property type="protein sequence ID" value="AEL69831.1"/>
    <property type="status" value="ALT_INIT"/>
    <property type="molecule type" value="Genomic_DNA"/>
</dbReference>
<dbReference type="SMR" id="Q0SMP6"/>
<dbReference type="STRING" id="29518.BLA32_01195"/>
<dbReference type="MEROPS" id="S14.001"/>
<dbReference type="KEGG" id="baf:BAPKO_0647"/>
<dbReference type="KEGG" id="bafz:BafPKo_0631"/>
<dbReference type="PATRIC" id="fig|390236.22.peg.604"/>
<dbReference type="eggNOG" id="COG0740">
    <property type="taxonomic scope" value="Bacteria"/>
</dbReference>
<dbReference type="HOGENOM" id="CLU_058707_3_2_12"/>
<dbReference type="Proteomes" id="UP000005216">
    <property type="component" value="Chromosome"/>
</dbReference>
<dbReference type="GO" id="GO:0005737">
    <property type="term" value="C:cytoplasm"/>
    <property type="evidence" value="ECO:0007669"/>
    <property type="project" value="UniProtKB-SubCell"/>
</dbReference>
<dbReference type="GO" id="GO:0009368">
    <property type="term" value="C:endopeptidase Clp complex"/>
    <property type="evidence" value="ECO:0007669"/>
    <property type="project" value="TreeGrafter"/>
</dbReference>
<dbReference type="GO" id="GO:0004176">
    <property type="term" value="F:ATP-dependent peptidase activity"/>
    <property type="evidence" value="ECO:0007669"/>
    <property type="project" value="InterPro"/>
</dbReference>
<dbReference type="GO" id="GO:0051117">
    <property type="term" value="F:ATPase binding"/>
    <property type="evidence" value="ECO:0007669"/>
    <property type="project" value="TreeGrafter"/>
</dbReference>
<dbReference type="GO" id="GO:0004252">
    <property type="term" value="F:serine-type endopeptidase activity"/>
    <property type="evidence" value="ECO:0007669"/>
    <property type="project" value="UniProtKB-UniRule"/>
</dbReference>
<dbReference type="GO" id="GO:0006515">
    <property type="term" value="P:protein quality control for misfolded or incompletely synthesized proteins"/>
    <property type="evidence" value="ECO:0007669"/>
    <property type="project" value="TreeGrafter"/>
</dbReference>
<dbReference type="CDD" id="cd07017">
    <property type="entry name" value="S14_ClpP_2"/>
    <property type="match status" value="1"/>
</dbReference>
<dbReference type="FunFam" id="3.90.226.10:FF:000001">
    <property type="entry name" value="ATP-dependent Clp protease proteolytic subunit"/>
    <property type="match status" value="1"/>
</dbReference>
<dbReference type="Gene3D" id="3.90.226.10">
    <property type="entry name" value="2-enoyl-CoA Hydratase, Chain A, domain 1"/>
    <property type="match status" value="1"/>
</dbReference>
<dbReference type="HAMAP" id="MF_00444">
    <property type="entry name" value="ClpP"/>
    <property type="match status" value="1"/>
</dbReference>
<dbReference type="InterPro" id="IPR001907">
    <property type="entry name" value="ClpP"/>
</dbReference>
<dbReference type="InterPro" id="IPR029045">
    <property type="entry name" value="ClpP/crotonase-like_dom_sf"/>
</dbReference>
<dbReference type="InterPro" id="IPR023562">
    <property type="entry name" value="ClpP/TepA"/>
</dbReference>
<dbReference type="InterPro" id="IPR018215">
    <property type="entry name" value="ClpP_Ser_AS"/>
</dbReference>
<dbReference type="NCBIfam" id="TIGR00493">
    <property type="entry name" value="clpP"/>
    <property type="match status" value="1"/>
</dbReference>
<dbReference type="NCBIfam" id="NF001368">
    <property type="entry name" value="PRK00277.1"/>
    <property type="match status" value="1"/>
</dbReference>
<dbReference type="NCBIfam" id="NF009205">
    <property type="entry name" value="PRK12553.1"/>
    <property type="match status" value="1"/>
</dbReference>
<dbReference type="PANTHER" id="PTHR10381">
    <property type="entry name" value="ATP-DEPENDENT CLP PROTEASE PROTEOLYTIC SUBUNIT"/>
    <property type="match status" value="1"/>
</dbReference>
<dbReference type="PANTHER" id="PTHR10381:SF70">
    <property type="entry name" value="ATP-DEPENDENT CLP PROTEASE PROTEOLYTIC SUBUNIT"/>
    <property type="match status" value="1"/>
</dbReference>
<dbReference type="Pfam" id="PF00574">
    <property type="entry name" value="CLP_protease"/>
    <property type="match status" value="1"/>
</dbReference>
<dbReference type="PRINTS" id="PR00127">
    <property type="entry name" value="CLPPROTEASEP"/>
</dbReference>
<dbReference type="SUPFAM" id="SSF52096">
    <property type="entry name" value="ClpP/crotonase"/>
    <property type="match status" value="1"/>
</dbReference>
<dbReference type="PROSITE" id="PS00381">
    <property type="entry name" value="CLP_PROTEASE_SER"/>
    <property type="match status" value="1"/>
</dbReference>
<sequence>MEFMHNLIPTVIEHTGNYERVFDIYSRLLRERIIFLSGEINDPKADTVIAQLLFLESEDSNKDIYLYLNSPGGSITAGLAIYDTMQYIKPDVRTICIGQAASMGAFLLAAGAKGKRESLTYSRIMIHQPWGGISGQASDINIQANEILRLKKLIIDIMSNQIGVDKEKLALDMERDYFMTSSDALKYGLIDNILVRE</sequence>
<feature type="chain" id="PRO_1000026066" description="ATP-dependent Clp protease proteolytic subunit">
    <location>
        <begin position="1"/>
        <end position="197"/>
    </location>
</feature>
<feature type="active site" description="Nucleophile" evidence="1">
    <location>
        <position position="102"/>
    </location>
</feature>
<feature type="active site" evidence="1">
    <location>
        <position position="127"/>
    </location>
</feature>
<protein>
    <recommendedName>
        <fullName evidence="1">ATP-dependent Clp protease proteolytic subunit</fullName>
        <ecNumber evidence="1">3.4.21.92</ecNumber>
    </recommendedName>
    <alternativeName>
        <fullName evidence="1">Endopeptidase Clp</fullName>
    </alternativeName>
</protein>
<accession>Q0SMP6</accession>
<accession>G0IQG1</accession>
<reference key="1">
    <citation type="journal article" date="2006" name="BMC Genomics">
        <title>Comparative genome analysis: selection pressure on the Borrelia vls cassettes is essential for infectivity.</title>
        <authorList>
            <person name="Gloeckner G."/>
            <person name="Schulte-Spechtel U."/>
            <person name="Schilhabel M."/>
            <person name="Felder M."/>
            <person name="Suehnel J."/>
            <person name="Wilske B."/>
            <person name="Platzer M."/>
        </authorList>
    </citation>
    <scope>NUCLEOTIDE SEQUENCE [LARGE SCALE GENOMIC DNA]</scope>
    <source>
        <strain>PKo</strain>
    </source>
</reference>
<reference key="2">
    <citation type="journal article" date="2011" name="J. Bacteriol.">
        <title>Whole-genome sequences of two Borrelia afzelii and two Borrelia garinii Lyme disease agent isolates.</title>
        <authorList>
            <person name="Casjens S.R."/>
            <person name="Mongodin E.F."/>
            <person name="Qiu W.G."/>
            <person name="Dunn J.J."/>
            <person name="Luft B.J."/>
            <person name="Fraser-Liggett C.M."/>
            <person name="Schutzer S.E."/>
        </authorList>
    </citation>
    <scope>NUCLEOTIDE SEQUENCE [LARGE SCALE GENOMIC DNA]</scope>
    <source>
        <strain>PKo</strain>
    </source>
</reference>
<proteinExistence type="inferred from homology"/>
<comment type="function">
    <text evidence="1">Cleaves peptides in various proteins in a process that requires ATP hydrolysis. Has a chymotrypsin-like activity. Plays a major role in the degradation of misfolded proteins.</text>
</comment>
<comment type="catalytic activity">
    <reaction evidence="1">
        <text>Hydrolysis of proteins to small peptides in the presence of ATP and magnesium. alpha-casein is the usual test substrate. In the absence of ATP, only oligopeptides shorter than five residues are hydrolyzed (such as succinyl-Leu-Tyr-|-NHMec, and Leu-Tyr-Leu-|-Tyr-Trp, in which cleavage of the -Tyr-|-Leu- and -Tyr-|-Trp bonds also occurs).</text>
        <dbReference type="EC" id="3.4.21.92"/>
    </reaction>
</comment>
<comment type="subunit">
    <text evidence="1">Fourteen ClpP subunits assemble into 2 heptameric rings which stack back to back to give a disk-like structure with a central cavity, resembling the structure of eukaryotic proteasomes.</text>
</comment>
<comment type="subcellular location">
    <subcellularLocation>
        <location evidence="1">Cytoplasm</location>
    </subcellularLocation>
</comment>
<comment type="similarity">
    <text evidence="1">Belongs to the peptidase S14 family.</text>
</comment>
<comment type="sequence caution" evidence="2">
    <conflict type="erroneous initiation">
        <sequence resource="EMBL-CDS" id="AEL69831"/>
    </conflict>
    <text>Truncated N-terminus.</text>
</comment>
<keyword id="KW-0963">Cytoplasm</keyword>
<keyword id="KW-0378">Hydrolase</keyword>
<keyword id="KW-0645">Protease</keyword>
<keyword id="KW-0720">Serine protease</keyword>
<name>CLPP_BORAP</name>
<organism>
    <name type="scientific">Borreliella afzelii (strain PKo)</name>
    <name type="common">Borrelia afzelii</name>
    <dbReference type="NCBI Taxonomy" id="390236"/>
    <lineage>
        <taxon>Bacteria</taxon>
        <taxon>Pseudomonadati</taxon>
        <taxon>Spirochaetota</taxon>
        <taxon>Spirochaetia</taxon>
        <taxon>Spirochaetales</taxon>
        <taxon>Borreliaceae</taxon>
        <taxon>Borreliella</taxon>
    </lineage>
</organism>
<gene>
    <name evidence="1" type="primary">clpP</name>
    <name type="ordered locus">BAPKO_0647</name>
    <name type="ordered locus">BafPKo_0631</name>
</gene>